<dbReference type="EMBL" id="AL123456">
    <property type="protein sequence ID" value="CCP43453.1"/>
    <property type="molecule type" value="Genomic_DNA"/>
</dbReference>
<dbReference type="PIR" id="H70642">
    <property type="entry name" value="H70642"/>
</dbReference>
<dbReference type="RefSeq" id="NP_215223.1">
    <property type="nucleotide sequence ID" value="NC_000962.3"/>
</dbReference>
<dbReference type="RefSeq" id="WP_003403594.1">
    <property type="nucleotide sequence ID" value="NZ_NVQJ01000007.1"/>
</dbReference>
<dbReference type="PDB" id="5V7Q">
    <property type="method" value="EM"/>
    <property type="resolution" value="3.70 A"/>
    <property type="chains" value="Y=1-77"/>
</dbReference>
<dbReference type="PDB" id="5V93">
    <property type="method" value="EM"/>
    <property type="resolution" value="4.00 A"/>
    <property type="chains" value="Y=1-77"/>
</dbReference>
<dbReference type="PDB" id="7KGB">
    <property type="method" value="EM"/>
    <property type="resolution" value="2.70 A"/>
    <property type="chains" value="Y=1-77"/>
</dbReference>
<dbReference type="PDB" id="7MSC">
    <property type="method" value="EM"/>
    <property type="resolution" value="2.97 A"/>
    <property type="chains" value="Y=1-77"/>
</dbReference>
<dbReference type="PDB" id="7MSH">
    <property type="method" value="EM"/>
    <property type="resolution" value="3.23 A"/>
    <property type="chains" value="Y=1-77"/>
</dbReference>
<dbReference type="PDB" id="7MSM">
    <property type="method" value="EM"/>
    <property type="resolution" value="2.79 A"/>
    <property type="chains" value="Y=1-77"/>
</dbReference>
<dbReference type="PDB" id="7MSZ">
    <property type="method" value="EM"/>
    <property type="resolution" value="3.10 A"/>
    <property type="chains" value="Y=1-77"/>
</dbReference>
<dbReference type="PDB" id="7MT2">
    <property type="method" value="EM"/>
    <property type="resolution" value="2.76 A"/>
    <property type="chains" value="Y=1-77"/>
</dbReference>
<dbReference type="PDB" id="7MT3">
    <property type="method" value="EM"/>
    <property type="resolution" value="2.80 A"/>
    <property type="chains" value="Y=1-77"/>
</dbReference>
<dbReference type="PDB" id="7MT7">
    <property type="method" value="EM"/>
    <property type="resolution" value="2.71 A"/>
    <property type="chains" value="Y=1-77"/>
</dbReference>
<dbReference type="PDB" id="7SFR">
    <property type="method" value="EM"/>
    <property type="resolution" value="2.60 A"/>
    <property type="chains" value="Y=1-77"/>
</dbReference>
<dbReference type="PDBsum" id="5V7Q"/>
<dbReference type="PDBsum" id="5V93"/>
<dbReference type="PDBsum" id="7KGB"/>
<dbReference type="PDBsum" id="7MSC"/>
<dbReference type="PDBsum" id="7MSH"/>
<dbReference type="PDBsum" id="7MSM"/>
<dbReference type="PDBsum" id="7MSZ"/>
<dbReference type="PDBsum" id="7MT2"/>
<dbReference type="PDBsum" id="7MT3"/>
<dbReference type="PDBsum" id="7MT7"/>
<dbReference type="PDBsum" id="7SFR"/>
<dbReference type="EMDB" id="EMD-22865"/>
<dbReference type="EMDB" id="EMD-23961"/>
<dbReference type="EMDB" id="EMD-23962"/>
<dbReference type="EMDB" id="EMD-23969"/>
<dbReference type="EMDB" id="EMD-23972"/>
<dbReference type="EMDB" id="EMD-23974"/>
<dbReference type="EMDB" id="EMD-23975"/>
<dbReference type="EMDB" id="EMD-23976"/>
<dbReference type="EMDB" id="EMD-8645"/>
<dbReference type="SMR" id="P9WHA7"/>
<dbReference type="FunCoup" id="P9WHA7">
    <property type="interactions" value="111"/>
</dbReference>
<dbReference type="STRING" id="83332.Rv0709"/>
<dbReference type="PaxDb" id="83332-Rv0709"/>
<dbReference type="DNASU" id="888374"/>
<dbReference type="GeneID" id="45424674"/>
<dbReference type="GeneID" id="888374"/>
<dbReference type="KEGG" id="mtu:Rv0709"/>
<dbReference type="KEGG" id="mtv:RVBD_0709"/>
<dbReference type="TubercuList" id="Rv0709"/>
<dbReference type="eggNOG" id="COG0255">
    <property type="taxonomic scope" value="Bacteria"/>
</dbReference>
<dbReference type="InParanoid" id="P9WHA7"/>
<dbReference type="OrthoDB" id="9815192at2"/>
<dbReference type="PhylomeDB" id="P9WHA7"/>
<dbReference type="PRO" id="PR:P9WHA7"/>
<dbReference type="Proteomes" id="UP000001584">
    <property type="component" value="Chromosome"/>
</dbReference>
<dbReference type="GO" id="GO:0022625">
    <property type="term" value="C:cytosolic large ribosomal subunit"/>
    <property type="evidence" value="ECO:0000318"/>
    <property type="project" value="GO_Central"/>
</dbReference>
<dbReference type="GO" id="GO:0003735">
    <property type="term" value="F:structural constituent of ribosome"/>
    <property type="evidence" value="ECO:0007669"/>
    <property type="project" value="InterPro"/>
</dbReference>
<dbReference type="GO" id="GO:0006412">
    <property type="term" value="P:translation"/>
    <property type="evidence" value="ECO:0007669"/>
    <property type="project" value="UniProtKB-UniRule"/>
</dbReference>
<dbReference type="CDD" id="cd00427">
    <property type="entry name" value="Ribosomal_L29_HIP"/>
    <property type="match status" value="1"/>
</dbReference>
<dbReference type="FunFam" id="1.10.287.310:FF:000001">
    <property type="entry name" value="50S ribosomal protein L29"/>
    <property type="match status" value="1"/>
</dbReference>
<dbReference type="Gene3D" id="1.10.287.310">
    <property type="match status" value="1"/>
</dbReference>
<dbReference type="HAMAP" id="MF_00374">
    <property type="entry name" value="Ribosomal_uL29"/>
    <property type="match status" value="1"/>
</dbReference>
<dbReference type="InterPro" id="IPR050063">
    <property type="entry name" value="Ribosomal_protein_uL29"/>
</dbReference>
<dbReference type="InterPro" id="IPR001854">
    <property type="entry name" value="Ribosomal_uL29"/>
</dbReference>
<dbReference type="InterPro" id="IPR018254">
    <property type="entry name" value="Ribosomal_uL29_CS"/>
</dbReference>
<dbReference type="InterPro" id="IPR036049">
    <property type="entry name" value="Ribosomal_uL29_sf"/>
</dbReference>
<dbReference type="NCBIfam" id="TIGR00012">
    <property type="entry name" value="L29"/>
    <property type="match status" value="1"/>
</dbReference>
<dbReference type="PANTHER" id="PTHR10916">
    <property type="entry name" value="60S RIBOSOMAL PROTEIN L35/50S RIBOSOMAL PROTEIN L29"/>
    <property type="match status" value="1"/>
</dbReference>
<dbReference type="PANTHER" id="PTHR10916:SF0">
    <property type="entry name" value="LARGE RIBOSOMAL SUBUNIT PROTEIN UL29C"/>
    <property type="match status" value="1"/>
</dbReference>
<dbReference type="Pfam" id="PF00831">
    <property type="entry name" value="Ribosomal_L29"/>
    <property type="match status" value="1"/>
</dbReference>
<dbReference type="SUPFAM" id="SSF46561">
    <property type="entry name" value="Ribosomal protein L29 (L29p)"/>
    <property type="match status" value="1"/>
</dbReference>
<dbReference type="PROSITE" id="PS00579">
    <property type="entry name" value="RIBOSOMAL_L29"/>
    <property type="match status" value="1"/>
</dbReference>
<accession>P9WHA7</accession>
<accession>L0T7A3</accession>
<accession>P95057</accession>
<protein>
    <recommendedName>
        <fullName evidence="2">Large ribosomal subunit protein uL29</fullName>
    </recommendedName>
    <alternativeName>
        <fullName>50S ribosomal protein L29</fullName>
    </alternativeName>
</protein>
<gene>
    <name type="primary">rpmC</name>
    <name type="ordered locus">Rv0709</name>
    <name type="ORF">MTCY210.28</name>
</gene>
<keyword id="KW-0002">3D-structure</keyword>
<keyword id="KW-1185">Reference proteome</keyword>
<keyword id="KW-0687">Ribonucleoprotein</keyword>
<keyword id="KW-0689">Ribosomal protein</keyword>
<proteinExistence type="evidence at protein level"/>
<evidence type="ECO:0000269" key="1">
    <source>
    </source>
</evidence>
<evidence type="ECO:0000305" key="2"/>
<feature type="initiator methionine" description="Removed" evidence="1">
    <location>
        <position position="1"/>
    </location>
</feature>
<feature type="chain" id="PRO_0000130424" description="Large ribosomal subunit protein uL29">
    <location>
        <begin position="2"/>
        <end position="77"/>
    </location>
</feature>
<comment type="similarity">
    <text evidence="2">Belongs to the universal ribosomal protein uL29 family.</text>
</comment>
<organism>
    <name type="scientific">Mycobacterium tuberculosis (strain ATCC 25618 / H37Rv)</name>
    <dbReference type="NCBI Taxonomy" id="83332"/>
    <lineage>
        <taxon>Bacteria</taxon>
        <taxon>Bacillati</taxon>
        <taxon>Actinomycetota</taxon>
        <taxon>Actinomycetes</taxon>
        <taxon>Mycobacteriales</taxon>
        <taxon>Mycobacteriaceae</taxon>
        <taxon>Mycobacterium</taxon>
        <taxon>Mycobacterium tuberculosis complex</taxon>
    </lineage>
</organism>
<sequence length="77" mass="8859">MAVGVSPGELRELTDEELAERLRESKEELFNLRFQMATGQLNNNRRLRTVRQEIARIYTVLRERELGLATGPDGKES</sequence>
<name>RL29_MYCTU</name>
<reference key="1">
    <citation type="journal article" date="1998" name="Nature">
        <title>Deciphering the biology of Mycobacterium tuberculosis from the complete genome sequence.</title>
        <authorList>
            <person name="Cole S.T."/>
            <person name="Brosch R."/>
            <person name="Parkhill J."/>
            <person name="Garnier T."/>
            <person name="Churcher C.M."/>
            <person name="Harris D.E."/>
            <person name="Gordon S.V."/>
            <person name="Eiglmeier K."/>
            <person name="Gas S."/>
            <person name="Barry C.E. III"/>
            <person name="Tekaia F."/>
            <person name="Badcock K."/>
            <person name="Basham D."/>
            <person name="Brown D."/>
            <person name="Chillingworth T."/>
            <person name="Connor R."/>
            <person name="Davies R.M."/>
            <person name="Devlin K."/>
            <person name="Feltwell T."/>
            <person name="Gentles S."/>
            <person name="Hamlin N."/>
            <person name="Holroyd S."/>
            <person name="Hornsby T."/>
            <person name="Jagels K."/>
            <person name="Krogh A."/>
            <person name="McLean J."/>
            <person name="Moule S."/>
            <person name="Murphy L.D."/>
            <person name="Oliver S."/>
            <person name="Osborne J."/>
            <person name="Quail M.A."/>
            <person name="Rajandream M.A."/>
            <person name="Rogers J."/>
            <person name="Rutter S."/>
            <person name="Seeger K."/>
            <person name="Skelton S."/>
            <person name="Squares S."/>
            <person name="Squares R."/>
            <person name="Sulston J.E."/>
            <person name="Taylor K."/>
            <person name="Whitehead S."/>
            <person name="Barrell B.G."/>
        </authorList>
    </citation>
    <scope>NUCLEOTIDE SEQUENCE [LARGE SCALE GENOMIC DNA]</scope>
    <source>
        <strain>ATCC 25618 / H37Rv</strain>
    </source>
</reference>
<reference key="2">
    <citation type="journal article" date="2007" name="Microbiology">
        <title>Experimental determination of translational starts using peptide mass mapping and tandem mass spectrometry within the proteome of Mycobacterium tuberculosis.</title>
        <authorList>
            <person name="Rison S.C."/>
            <person name="Mattow J."/>
            <person name="Jungblut P.R."/>
            <person name="Stoker N.G."/>
        </authorList>
    </citation>
    <scope>IDENTIFICATION BY MASS SPECTROMETRY</scope>
    <scope>DETERMINATION OF TRANSLATIONAL START SITE</scope>
    <scope>CLEAVAGE OF INITIATOR METHIONINE</scope>
    <source>
        <strain>ATCC 25618 / H37Rv</strain>
    </source>
</reference>
<reference key="3">
    <citation type="journal article" date="2011" name="Mol. Cell. Proteomics">
        <title>Proteogenomic analysis of Mycobacterium tuberculosis by high resolution mass spectrometry.</title>
        <authorList>
            <person name="Kelkar D.S."/>
            <person name="Kumar D."/>
            <person name="Kumar P."/>
            <person name="Balakrishnan L."/>
            <person name="Muthusamy B."/>
            <person name="Yadav A.K."/>
            <person name="Shrivastava P."/>
            <person name="Marimuthu A."/>
            <person name="Anand S."/>
            <person name="Sundaram H."/>
            <person name="Kingsbury R."/>
            <person name="Harsha H.C."/>
            <person name="Nair B."/>
            <person name="Prasad T.S."/>
            <person name="Chauhan D.S."/>
            <person name="Katoch K."/>
            <person name="Katoch V.M."/>
            <person name="Kumar P."/>
            <person name="Chaerkady R."/>
            <person name="Ramachandran S."/>
            <person name="Dash D."/>
            <person name="Pandey A."/>
        </authorList>
    </citation>
    <scope>IDENTIFICATION BY MASS SPECTROMETRY [LARGE SCALE ANALYSIS]</scope>
    <source>
        <strain>ATCC 25618 / H37Rv</strain>
    </source>
</reference>